<name>CP2C5_RABIT</name>
<evidence type="ECO:0000250" key="1"/>
<evidence type="ECO:0000305" key="2"/>
<evidence type="ECO:0007829" key="3">
    <source>
        <dbReference type="PDB" id="1DT6"/>
    </source>
</evidence>
<evidence type="ECO:0007829" key="4">
    <source>
        <dbReference type="PDB" id="1N6B"/>
    </source>
</evidence>
<evidence type="ECO:0007829" key="5">
    <source>
        <dbReference type="PDB" id="1NR6"/>
    </source>
</evidence>
<keyword id="KW-0002">3D-structure</keyword>
<keyword id="KW-0256">Endoplasmic reticulum</keyword>
<keyword id="KW-0349">Heme</keyword>
<keyword id="KW-0408">Iron</keyword>
<keyword id="KW-0472">Membrane</keyword>
<keyword id="KW-0479">Metal-binding</keyword>
<keyword id="KW-0492">Microsome</keyword>
<keyword id="KW-0503">Monooxygenase</keyword>
<keyword id="KW-0560">Oxidoreductase</keyword>
<keyword id="KW-1185">Reference proteome</keyword>
<accession>P00179</accession>
<accession>Q29511</accession>
<organism>
    <name type="scientific">Oryctolagus cuniculus</name>
    <name type="common">Rabbit</name>
    <dbReference type="NCBI Taxonomy" id="9986"/>
    <lineage>
        <taxon>Eukaryota</taxon>
        <taxon>Metazoa</taxon>
        <taxon>Chordata</taxon>
        <taxon>Craniata</taxon>
        <taxon>Vertebrata</taxon>
        <taxon>Euteleostomi</taxon>
        <taxon>Mammalia</taxon>
        <taxon>Eutheria</taxon>
        <taxon>Euarchontoglires</taxon>
        <taxon>Glires</taxon>
        <taxon>Lagomorpha</taxon>
        <taxon>Leporidae</taxon>
        <taxon>Oryctolagus</taxon>
    </lineage>
</organism>
<reference key="1">
    <citation type="journal article" date="1985" name="J. Biol. Chem.">
        <title>Multiple gene-like sequences related to the rabbit hepatic progesterone 21-hydroxylase cytochrome P-450 1.</title>
        <authorList>
            <person name="Tukey R.H."/>
            <person name="Okino S."/>
            <person name="Barnes H.J."/>
            <person name="Griffin K.J."/>
            <person name="Johnson E.F."/>
        </authorList>
    </citation>
    <scope>NUCLEOTIDE SEQUENCE [MRNA]</scope>
</reference>
<reference key="2">
    <citation type="submission" date="1986-02" db="EMBL/GenBank/DDBJ databases">
        <authorList>
            <person name="Tukey R.H."/>
        </authorList>
    </citation>
    <scope>SEQUENCE REVISION TO 252</scope>
</reference>
<reference key="3">
    <citation type="journal article" date="1990" name="J. Biol. Chem.">
        <title>Characterization of the CYP2C5 gene in 21L III/J rabbits. Allelic variation affects the expression of P450IIC5.</title>
        <authorList>
            <person name="Pendurthi U.R."/>
            <person name="Lamb J.G."/>
            <person name="Nguyen N."/>
            <person name="Johnson E.F."/>
            <person name="Tukey R.H."/>
        </authorList>
    </citation>
    <scope>NUCLEOTIDE SEQUENCE [MRNA]</scope>
    <source>
        <strain>III/J</strain>
        <tissue>Liver</tissue>
    </source>
</reference>
<reference key="4">
    <citation type="journal article" date="2000" name="Mol. Cell">
        <title>Mammalian microsomal cytochrome P450 monooxygenase: structural adaptations for membrane binding and functional diversity.</title>
        <authorList>
            <person name="Williams P.A."/>
            <person name="Cosme J."/>
            <person name="Sridhar V."/>
            <person name="Johnson E.F."/>
            <person name="McRee D.E."/>
        </authorList>
    </citation>
    <scope>X-RAY CRYSTALLOGRAPHY (3.0 ANGSTROMS)</scope>
</reference>
<reference key="5">
    <citation type="journal article" date="2003" name="Biochemistry">
        <title>Structure of a substrate complex of mammalian cytochrome P450 2C5 at 2.3 A resolution: evidence for multiple substrate binding modes.</title>
        <authorList>
            <person name="Wester M.R."/>
            <person name="Johnson E.F."/>
            <person name="Marques-Soares C."/>
            <person name="Dansette P.M."/>
            <person name="Mansuy D."/>
            <person name="Stout C.D."/>
        </authorList>
    </citation>
    <scope>X-RAY CRYSTALLOGRAPHY (2.3 ANGSTROMS) IN COMPLEX WITH SUBSTRATE ANALOG</scope>
</reference>
<dbReference type="EC" id="1.14.14.1"/>
<dbReference type="EMBL" id="M11299">
    <property type="protein sequence ID" value="AAA31209.1"/>
    <property type="molecule type" value="mRNA"/>
</dbReference>
<dbReference type="EMBL" id="M55664">
    <property type="protein sequence ID" value="AAA63461.1"/>
    <property type="molecule type" value="mRNA"/>
</dbReference>
<dbReference type="PIR" id="A00180">
    <property type="entry name" value="O4RBP4"/>
</dbReference>
<dbReference type="RefSeq" id="NP_001164397.1">
    <property type="nucleotide sequence ID" value="NM_001170926.1"/>
</dbReference>
<dbReference type="PDB" id="1DT6">
    <property type="method" value="X-ray"/>
    <property type="resolution" value="3.00 A"/>
    <property type="chains" value="A=22-487"/>
</dbReference>
<dbReference type="PDB" id="1N6B">
    <property type="method" value="X-ray"/>
    <property type="resolution" value="2.30 A"/>
    <property type="chains" value="A=19-487"/>
</dbReference>
<dbReference type="PDB" id="1NR6">
    <property type="method" value="X-ray"/>
    <property type="resolution" value="2.10 A"/>
    <property type="chains" value="A=19-487"/>
</dbReference>
<dbReference type="PDBsum" id="1DT6"/>
<dbReference type="PDBsum" id="1N6B"/>
<dbReference type="PDBsum" id="1NR6"/>
<dbReference type="SMR" id="P00179"/>
<dbReference type="FunCoup" id="P00179">
    <property type="interactions" value="363"/>
</dbReference>
<dbReference type="ChEMBL" id="CHEMBL1907985"/>
<dbReference type="PaxDb" id="9986-ENSOCUP00000020892"/>
<dbReference type="Ensembl" id="ENSOCUT00000021366.1">
    <property type="protein sequence ID" value="ENSOCUP00000020892.1"/>
    <property type="gene ID" value="ENSOCUG00000021501.3"/>
</dbReference>
<dbReference type="GeneID" id="100328549"/>
<dbReference type="KEGG" id="ocu:100328549"/>
<dbReference type="CTD" id="100328549"/>
<dbReference type="eggNOG" id="KOG0156">
    <property type="taxonomic scope" value="Eukaryota"/>
</dbReference>
<dbReference type="GeneTree" id="ENSGT00940000154299"/>
<dbReference type="HOGENOM" id="CLU_001570_22_0_1"/>
<dbReference type="InParanoid" id="P00179"/>
<dbReference type="OMA" id="IWKDANE"/>
<dbReference type="OrthoDB" id="1103324at2759"/>
<dbReference type="TreeFam" id="TF352043"/>
<dbReference type="SABIO-RK" id="P00179"/>
<dbReference type="EvolutionaryTrace" id="P00179"/>
<dbReference type="PRO" id="PR:P00179"/>
<dbReference type="Proteomes" id="UP000001811">
    <property type="component" value="Chromosome 18"/>
</dbReference>
<dbReference type="Bgee" id="ENSOCUG00000021501">
    <property type="expression patterns" value="Expressed in liver and 6 other cell types or tissues"/>
</dbReference>
<dbReference type="GO" id="GO:0005789">
    <property type="term" value="C:endoplasmic reticulum membrane"/>
    <property type="evidence" value="ECO:0007669"/>
    <property type="project" value="UniProtKB-SubCell"/>
</dbReference>
<dbReference type="GO" id="GO:0020037">
    <property type="term" value="F:heme binding"/>
    <property type="evidence" value="ECO:0007669"/>
    <property type="project" value="InterPro"/>
</dbReference>
<dbReference type="GO" id="GO:0005506">
    <property type="term" value="F:iron ion binding"/>
    <property type="evidence" value="ECO:0007669"/>
    <property type="project" value="InterPro"/>
</dbReference>
<dbReference type="GO" id="GO:0016712">
    <property type="term" value="F:oxidoreductase activity, acting on paired donors, with incorporation or reduction of molecular oxygen, reduced flavin or flavoprotein as one donor, and incorporation of one atom of oxygen"/>
    <property type="evidence" value="ECO:0007669"/>
    <property type="project" value="UniProtKB-EC"/>
</dbReference>
<dbReference type="GO" id="GO:0006082">
    <property type="term" value="P:organic acid metabolic process"/>
    <property type="evidence" value="ECO:0007669"/>
    <property type="project" value="TreeGrafter"/>
</dbReference>
<dbReference type="GO" id="GO:0006805">
    <property type="term" value="P:xenobiotic metabolic process"/>
    <property type="evidence" value="ECO:0007669"/>
    <property type="project" value="TreeGrafter"/>
</dbReference>
<dbReference type="CDD" id="cd20665">
    <property type="entry name" value="CYP2C-like"/>
    <property type="match status" value="1"/>
</dbReference>
<dbReference type="FunFam" id="1.10.630.10:FF:000299">
    <property type="entry name" value="Cytochrome P450 2C9"/>
    <property type="match status" value="1"/>
</dbReference>
<dbReference type="Gene3D" id="1.10.630.10">
    <property type="entry name" value="Cytochrome P450"/>
    <property type="match status" value="1"/>
</dbReference>
<dbReference type="InterPro" id="IPR001128">
    <property type="entry name" value="Cyt_P450"/>
</dbReference>
<dbReference type="InterPro" id="IPR017972">
    <property type="entry name" value="Cyt_P450_CS"/>
</dbReference>
<dbReference type="InterPro" id="IPR002401">
    <property type="entry name" value="Cyt_P450_E_grp-I"/>
</dbReference>
<dbReference type="InterPro" id="IPR036396">
    <property type="entry name" value="Cyt_P450_sf"/>
</dbReference>
<dbReference type="InterPro" id="IPR050182">
    <property type="entry name" value="Cytochrome_P450_fam2"/>
</dbReference>
<dbReference type="PANTHER" id="PTHR24300:SF400">
    <property type="entry name" value="CYTOCHROME P450 2C9"/>
    <property type="match status" value="1"/>
</dbReference>
<dbReference type="PANTHER" id="PTHR24300">
    <property type="entry name" value="CYTOCHROME P450 508A4-RELATED"/>
    <property type="match status" value="1"/>
</dbReference>
<dbReference type="Pfam" id="PF00067">
    <property type="entry name" value="p450"/>
    <property type="match status" value="1"/>
</dbReference>
<dbReference type="PRINTS" id="PR00463">
    <property type="entry name" value="EP450I"/>
</dbReference>
<dbReference type="PRINTS" id="PR00385">
    <property type="entry name" value="P450"/>
</dbReference>
<dbReference type="SUPFAM" id="SSF48264">
    <property type="entry name" value="Cytochrome P450"/>
    <property type="match status" value="1"/>
</dbReference>
<dbReference type="PROSITE" id="PS00086">
    <property type="entry name" value="CYTOCHROME_P450"/>
    <property type="match status" value="1"/>
</dbReference>
<comment type="function">
    <text>Cytochromes P450 are a group of heme-thiolate monooxygenases. In liver microsomes, this enzyme is involved in an NADPH-dependent electron transport pathway. It oxidizes a variety of structurally unrelated compounds, including steroids, fatty acids, and xenobiotics.</text>
</comment>
<comment type="catalytic activity">
    <reaction>
        <text>an organic molecule + reduced [NADPH--hemoprotein reductase] + O2 = an alcohol + oxidized [NADPH--hemoprotein reductase] + H2O + H(+)</text>
        <dbReference type="Rhea" id="RHEA:17149"/>
        <dbReference type="Rhea" id="RHEA-COMP:11964"/>
        <dbReference type="Rhea" id="RHEA-COMP:11965"/>
        <dbReference type="ChEBI" id="CHEBI:15377"/>
        <dbReference type="ChEBI" id="CHEBI:15378"/>
        <dbReference type="ChEBI" id="CHEBI:15379"/>
        <dbReference type="ChEBI" id="CHEBI:30879"/>
        <dbReference type="ChEBI" id="CHEBI:57618"/>
        <dbReference type="ChEBI" id="CHEBI:58210"/>
        <dbReference type="ChEBI" id="CHEBI:142491"/>
        <dbReference type="EC" id="1.14.14.1"/>
    </reaction>
</comment>
<comment type="cofactor">
    <cofactor>
        <name>heme</name>
        <dbReference type="ChEBI" id="CHEBI:30413"/>
    </cofactor>
</comment>
<comment type="subcellular location">
    <subcellularLocation>
        <location evidence="1">Endoplasmic reticulum membrane</location>
    </subcellularLocation>
    <subcellularLocation>
        <location evidence="1">Microsome membrane</location>
    </subcellularLocation>
</comment>
<comment type="induction">
    <text>P450 can be induced to high levels in liver and other tissues by various foreign compounds, including drugs, pesticides, and carcinogens.</text>
</comment>
<comment type="miscellaneous">
    <text>This protein differs from other forms of cytochrome P450 in that it catalyzes the 21-hydroxylation of progesterone, resulting in the formation of deoxycorticosterone.</text>
</comment>
<comment type="similarity">
    <text evidence="2">Belongs to the cytochrome P450 family.</text>
</comment>
<protein>
    <recommendedName>
        <fullName>Cytochrome P450 2C5</fullName>
        <ecNumber>1.14.14.1</ecNumber>
    </recommendedName>
    <alternativeName>
        <fullName>CYPIIC5</fullName>
    </alternativeName>
    <alternativeName>
        <fullName>Cytochrome P450 1</fullName>
    </alternativeName>
    <alternativeName>
        <fullName>Cytochrome P450IIC5</fullName>
    </alternativeName>
    <alternativeName>
        <fullName>Progesterone 21-hydroxylase</fullName>
    </alternativeName>
</protein>
<proteinExistence type="evidence at protein level"/>
<sequence>MDPVVVLVLGLCCLLLLSIWKQNSGRGKLPPGPTPFPIIGNILQIDAKDISKSLTKFSECYGPVFTVYLGMKPTVVLHGYEAVKEALVDLGEEFAGRGSVPILEKVSKGLGIAFSNAKTWKEMRRFSLMTLRNFGMGKRSIEDRIQEEARCLVEELRKTNASPCDPTFILGCAPCNVICSVIFHNRFDYKDEEFLKLMESLNENVRILSSPWLQVYNNFPALLDYFPGIHKTLLKNADYIKNFIMEKVKEHQKLLDVNNPRDFIDCFLIKMEQENNLEFTLESLVIAVSDLFGAGTETTSTTLRYSLLLLLKHPEVAARVQEEIERVIGRHRSPCMQDRSRMPYTDAVIHEIQRFIDLLPTNLPHAVTRDVRFRNYFIPKGTDIITSLTSVLHDEKAFPNPKVFDPGHFLDESGNFKKSDYFMPFSAGKRMCVGEGLARMELFLFLTSILQNFKLQSLVEPKDLDITAVVNGFVSVPPSYQLCFIPI</sequence>
<gene>
    <name type="primary">CYP2C5</name>
</gene>
<feature type="chain" id="PRO_0000051696" description="Cytochrome P450 2C5">
    <location>
        <begin position="1"/>
        <end position="487"/>
    </location>
</feature>
<feature type="binding site" description="axial binding residue">
    <location>
        <position position="432"/>
    </location>
    <ligand>
        <name>heme</name>
        <dbReference type="ChEBI" id="CHEBI:30413"/>
    </ligand>
    <ligandPart>
        <name>Fe</name>
        <dbReference type="ChEBI" id="CHEBI:18248"/>
    </ligandPart>
</feature>
<feature type="sequence conflict" description="In Ref. 1; AAA31209." evidence="2" ref="1">
    <original>R</original>
    <variation>T</variation>
    <location>
        <position position="97"/>
    </location>
</feature>
<feature type="sequence conflict" description="In Ref. 1; AAA31209." evidence="2" ref="1">
    <original>Q</original>
    <variation>E</variation>
    <location>
        <position position="252"/>
    </location>
</feature>
<feature type="turn" evidence="5">
    <location>
        <begin position="37"/>
        <end position="39"/>
    </location>
</feature>
<feature type="helix" evidence="5">
    <location>
        <begin position="42"/>
        <end position="44"/>
    </location>
</feature>
<feature type="helix" evidence="5">
    <location>
        <begin position="50"/>
        <end position="61"/>
    </location>
</feature>
<feature type="strand" evidence="5">
    <location>
        <begin position="63"/>
        <end position="77"/>
    </location>
</feature>
<feature type="helix" evidence="5">
    <location>
        <begin position="80"/>
        <end position="87"/>
    </location>
</feature>
<feature type="turn" evidence="5">
    <location>
        <begin position="88"/>
        <end position="94"/>
    </location>
</feature>
<feature type="strand" evidence="4">
    <location>
        <begin position="95"/>
        <end position="97"/>
    </location>
</feature>
<feature type="helix" evidence="5">
    <location>
        <begin position="103"/>
        <end position="107"/>
    </location>
</feature>
<feature type="strand" evidence="5">
    <location>
        <begin position="111"/>
        <end position="114"/>
    </location>
</feature>
<feature type="helix" evidence="5">
    <location>
        <begin position="117"/>
        <end position="130"/>
    </location>
</feature>
<feature type="turn" evidence="5">
    <location>
        <begin position="133"/>
        <end position="136"/>
    </location>
</feature>
<feature type="strand" evidence="5">
    <location>
        <begin position="137"/>
        <end position="139"/>
    </location>
</feature>
<feature type="helix" evidence="5">
    <location>
        <begin position="141"/>
        <end position="157"/>
    </location>
</feature>
<feature type="turn" evidence="5">
    <location>
        <begin position="158"/>
        <end position="161"/>
    </location>
</feature>
<feature type="helix" evidence="5">
    <location>
        <begin position="167"/>
        <end position="183"/>
    </location>
</feature>
<feature type="helix" evidence="5">
    <location>
        <begin position="192"/>
        <end position="207"/>
    </location>
</feature>
<feature type="helix" evidence="5">
    <location>
        <begin position="214"/>
        <end position="217"/>
    </location>
</feature>
<feature type="helix" evidence="5">
    <location>
        <begin position="220"/>
        <end position="225"/>
    </location>
</feature>
<feature type="helix" evidence="5">
    <location>
        <begin position="227"/>
        <end position="254"/>
    </location>
</feature>
<feature type="helix" evidence="5">
    <location>
        <begin position="263"/>
        <end position="272"/>
    </location>
</feature>
<feature type="strand" evidence="3">
    <location>
        <begin position="273"/>
        <end position="275"/>
    </location>
</feature>
<feature type="helix" evidence="5">
    <location>
        <begin position="281"/>
        <end position="312"/>
    </location>
</feature>
<feature type="helix" evidence="5">
    <location>
        <begin position="314"/>
        <end position="327"/>
    </location>
</feature>
<feature type="strand" evidence="5">
    <location>
        <begin position="330"/>
        <end position="332"/>
    </location>
</feature>
<feature type="helix" evidence="5">
    <location>
        <begin position="336"/>
        <end position="341"/>
    </location>
</feature>
<feature type="helix" evidence="5">
    <location>
        <begin position="343"/>
        <end position="356"/>
    </location>
</feature>
<feature type="strand" evidence="5">
    <location>
        <begin position="371"/>
        <end position="373"/>
    </location>
</feature>
<feature type="strand" evidence="5">
    <location>
        <begin position="376"/>
        <end position="378"/>
    </location>
</feature>
<feature type="strand" evidence="5">
    <location>
        <begin position="383"/>
        <end position="386"/>
    </location>
</feature>
<feature type="helix" evidence="5">
    <location>
        <begin position="388"/>
        <end position="392"/>
    </location>
</feature>
<feature type="turn" evidence="5">
    <location>
        <begin position="395"/>
        <end position="397"/>
    </location>
</feature>
<feature type="strand" evidence="5">
    <location>
        <begin position="398"/>
        <end position="400"/>
    </location>
</feature>
<feature type="helix" evidence="5">
    <location>
        <begin position="406"/>
        <end position="409"/>
    </location>
</feature>
<feature type="strand" evidence="3">
    <location>
        <begin position="412"/>
        <end position="415"/>
    </location>
</feature>
<feature type="helix" evidence="5">
    <location>
        <begin position="428"/>
        <end position="430"/>
    </location>
</feature>
<feature type="helix" evidence="5">
    <location>
        <begin position="435"/>
        <end position="452"/>
    </location>
</feature>
<feature type="strand" evidence="5">
    <location>
        <begin position="453"/>
        <end position="459"/>
    </location>
</feature>
<feature type="helix" evidence="5">
    <location>
        <begin position="461"/>
        <end position="463"/>
    </location>
</feature>
<feature type="strand" evidence="5">
    <location>
        <begin position="472"/>
        <end position="476"/>
    </location>
</feature>
<feature type="strand" evidence="5">
    <location>
        <begin position="482"/>
        <end position="486"/>
    </location>
</feature>